<reference key="1">
    <citation type="journal article" date="2010" name="Toxicon">
        <title>Differential gene expression profiles in the venom gland/sac of Eumenes pomiformis (Hymenoptera: Eumenidae).</title>
        <authorList>
            <person name="Baek J.H."/>
            <person name="Lee S.H."/>
        </authorList>
    </citation>
    <scope>NUCLEOTIDE SEQUENCE [MRNA]</scope>
    <scope>MASS SPECTROMETRY</scope>
    <scope>SUBCELLULAR LOCATION</scope>
    <scope>AMIDATION AT LEU-62</scope>
    <source>
        <tissue>Venom</tissue>
        <tissue>Venom gland</tissue>
    </source>
</reference>
<reference key="2">
    <citation type="journal article" date="2011" name="Peptides">
        <title>Venom peptides from solitary hunting wasps induce feeding disorder in lepidopteran larvae.</title>
        <authorList>
            <person name="Baek J.H."/>
            <person name="Ji Y."/>
            <person name="Shin J.S."/>
            <person name="Lee S."/>
            <person name="Lee S.H."/>
        </authorList>
    </citation>
    <scope>FUNCTION</scope>
    <scope>BIOASSAY</scope>
    <scope>SYNTHESIS OF 49-62</scope>
</reference>
<reference key="3">
    <citation type="journal article" date="2023" name="Toxicon">
        <title>Synthesized peptide analogs from Eumenes pomiformis (Hymenoptera: Eumenidae) venom reveals their antibiotic and pesticide activity potential.</title>
        <authorList>
            <person name="Bea R.S."/>
            <person name="Frawley E."/>
            <person name="Shen Q."/>
            <person name="Moyo S."/>
            <person name="Thelven J.M."/>
            <person name="North L."/>
        </authorList>
    </citation>
    <scope>FUNCTION</scope>
    <scope>SYNTHESIS OF 49-62</scope>
    <scope>MUTAGENESIS OF ASP-50; LEU-52; 56-LYS-LYS-57; VAL-58 AND 60-SER--LEU-62</scope>
    <scope>BIOASSAY</scope>
</reference>
<reference key="4">
    <citation type="journal article" date="2016" name="Toxins">
        <title>Peptide toxins in solitary wasp venoms.</title>
        <authorList>
            <person name="Konno K."/>
            <person name="Kazuma K."/>
            <person name="Nihei K."/>
        </authorList>
    </citation>
    <scope>REVIEW</scope>
</reference>
<accession>D1MEI7</accession>
<dbReference type="EMBL" id="GU136232">
    <property type="protein sequence ID" value="ACZ37393.1"/>
    <property type="molecule type" value="mRNA"/>
</dbReference>
<dbReference type="GO" id="GO:0005576">
    <property type="term" value="C:extracellular region"/>
    <property type="evidence" value="ECO:0007669"/>
    <property type="project" value="UniProtKB-SubCell"/>
</dbReference>
<dbReference type="GO" id="GO:0016020">
    <property type="term" value="C:membrane"/>
    <property type="evidence" value="ECO:0007669"/>
    <property type="project" value="UniProtKB-KW"/>
</dbReference>
<dbReference type="GO" id="GO:0044218">
    <property type="term" value="C:other organism cell membrane"/>
    <property type="evidence" value="ECO:0007669"/>
    <property type="project" value="UniProtKB-KW"/>
</dbReference>
<dbReference type="GO" id="GO:0090729">
    <property type="term" value="F:toxin activity"/>
    <property type="evidence" value="ECO:0007669"/>
    <property type="project" value="UniProtKB-KW"/>
</dbReference>
<dbReference type="GO" id="GO:0042742">
    <property type="term" value="P:defense response to bacterium"/>
    <property type="evidence" value="ECO:0007669"/>
    <property type="project" value="UniProtKB-KW"/>
</dbReference>
<dbReference type="GO" id="GO:0050832">
    <property type="term" value="P:defense response to fungus"/>
    <property type="evidence" value="ECO:0007669"/>
    <property type="project" value="UniProtKB-KW"/>
</dbReference>
<dbReference type="GO" id="GO:0045087">
    <property type="term" value="P:innate immune response"/>
    <property type="evidence" value="ECO:0007669"/>
    <property type="project" value="UniProtKB-KW"/>
</dbReference>
<dbReference type="GO" id="GO:0031640">
    <property type="term" value="P:killing of cells of another organism"/>
    <property type="evidence" value="ECO:0007669"/>
    <property type="project" value="UniProtKB-KW"/>
</dbReference>
<organism>
    <name type="scientific">Eumenes pomiformis</name>
    <name type="common">Potter wasp</name>
    <name type="synonym">Vespa pomiformis</name>
    <dbReference type="NCBI Taxonomy" id="693051"/>
    <lineage>
        <taxon>Eukaryota</taxon>
        <taxon>Metazoa</taxon>
        <taxon>Ecdysozoa</taxon>
        <taxon>Arthropoda</taxon>
        <taxon>Hexapoda</taxon>
        <taxon>Insecta</taxon>
        <taxon>Pterygota</taxon>
        <taxon>Neoptera</taxon>
        <taxon>Endopterygota</taxon>
        <taxon>Hymenoptera</taxon>
        <taxon>Apocrita</taxon>
        <taxon>Aculeata</taxon>
        <taxon>Vespoidea</taxon>
        <taxon>Vespidae</taxon>
        <taxon>Eumeninae</taxon>
        <taxon>Eumenes</taxon>
    </lineage>
</organism>
<feature type="signal peptide" evidence="2">
    <location>
        <begin position="1"/>
        <end position="22"/>
    </location>
</feature>
<feature type="propeptide" id="PRO_0000453660" evidence="8">
    <location>
        <begin position="23"/>
        <end position="48"/>
    </location>
</feature>
<feature type="peptide" id="PRO_5003024361" description="Venom peptide 2a" evidence="3">
    <location>
        <begin position="49"/>
        <end position="62"/>
    </location>
</feature>
<feature type="repeat" description="AXPX 1" evidence="8">
    <location>
        <begin position="22"/>
        <end position="25"/>
    </location>
</feature>
<feature type="repeat" description="AXPX 2" evidence="8">
    <location>
        <begin position="26"/>
        <end position="29"/>
    </location>
</feature>
<feature type="repeat" description="AXPX 3" evidence="8">
    <location>
        <begin position="32"/>
        <end position="35"/>
    </location>
</feature>
<feature type="repeat" description="AXPX 4" evidence="8">
    <location>
        <begin position="38"/>
        <end position="41"/>
    </location>
</feature>
<feature type="repeat" description="AXPX 5" evidence="8">
    <location>
        <begin position="44"/>
        <end position="47"/>
    </location>
</feature>
<feature type="modified residue" description="Leucine amide" evidence="3">
    <location>
        <position position="62"/>
    </location>
</feature>
<feature type="mutagenesis site" description="In amidated EpVp2a-D2K2; no change or increase in activity against bacteria, and no change or decrease in activity against fungi. No change in lethality when tested on water flies and lady beetles. Decrease in hemolytic activity." evidence="5">
    <original>D</original>
    <variation>K</variation>
    <location>
        <position position="50"/>
    </location>
</feature>
<feature type="mutagenesis site" description="In amidated EpVp2a-A4; loss of activity against bacteria and fungi; when associated with A-58. Decrease in hemolytic activity." evidence="5">
    <original>L</original>
    <variation>A</variation>
    <location>
        <position position="52"/>
    </location>
</feature>
<feature type="mutagenesis site" description="In amidated EpVp2a-KE; loss of activity on bacteria and fungi. No change in lethality when tested on water flies and lady beetles. Decrease in hemolytic activity." evidence="5">
    <original>KK</original>
    <variation>EE</variation>
    <location>
        <begin position="56"/>
        <end position="57"/>
    </location>
</feature>
<feature type="mutagenesis site" description="In amidated EpVp2a-O8K9; increase and decrease in activity against bacteria, and decrease in activity against fungi. Loss of ability to kill water flies, and no change in lethality when tested on lady beetles. Decrease in hemolytic activity." evidence="5">
    <original>KK</original>
    <variation>OO</variation>
    <location>
        <begin position="56"/>
        <end position="57"/>
    </location>
</feature>
<feature type="mutagenesis site" description="In amidated EpVp2a-A4; loss of activity against bacteria and fungi; when associated with A-52. No change in lethality when tested on water flies and lady beetles. Decrease in hemolytic activity." evidence="5">
    <original>V</original>
    <variation>A</variation>
    <location>
        <position position="58"/>
    </location>
</feature>
<feature type="mutagenesis site" description="In amidated EpVp2a-C3; loss of activity on bacteria and fungi. No change in lethality when tested on water flies and lady beetles. Decrease in hemolytic activity." evidence="5">
    <location>
        <begin position="60"/>
        <end position="62"/>
    </location>
</feature>
<sequence>MRGTSFILFAVVVILGFLNANAEPLANPAPLANPDPLANPDPLANPEAFDLLGLVKKVASALG</sequence>
<name>MASTA_EUMPO</name>
<comment type="function">
    <text evidence="4">Antimicrobial peptide. Shows activities against Gram-positive bacteria (S.aureus MIC=50 uM and 200 ug/ml, and B.subtilis MIC=200 ug/ml), Gram-negative bacterium E.coli (MIC=100 uM and 200 ug/ml) and fungi (B.cinerea MIC=5 uM, S.cerevisiae MIC=128 ug/ml, S.pombe MIC=128 ug/ml, A.nidulans MIC=128 ug/ml, and C.albicans MIC=64-100 uM) (PubMed:21184791, PubMed:36690087). Shows cytolytic activity against insect cell lines (PubMed:21184791). Its hemolytic activity is controversial, as Baek and colleagues report no activity while Bea and colleagues note a hemolytic activity (PubMed:21184791, PubMed:36690087). In vivo, peptide injection in the vicinity of the head and thorax of lepidopteran larvae induces feeding disorder followed by death due to starvation (PubMed:21184791). Is weakly lethal when tested on water flies (D.magna), but is not lethal on lady beetles (H.convergens).</text>
</comment>
<comment type="subcellular location">
    <subcellularLocation>
        <location evidence="3">Secreted</location>
    </subcellularLocation>
    <subcellularLocation>
        <location evidence="1">Target cell membrane</location>
    </subcellularLocation>
    <text evidence="10">Has an amphipathic alpha-helical conformation in hydrophobic environment.</text>
</comment>
<comment type="tissue specificity">
    <text evidence="9">Expressed by the venom gland.</text>
</comment>
<comment type="mass spectrometry"/>
<comment type="similarity">
    <text evidence="8">Belongs to the MCD family. Mastoparan subfamily.</text>
</comment>
<evidence type="ECO:0000250" key="1">
    <source>
        <dbReference type="UniProtKB" id="P0CJ38"/>
    </source>
</evidence>
<evidence type="ECO:0000255" key="2"/>
<evidence type="ECO:0000269" key="3">
    <source>
    </source>
</evidence>
<evidence type="ECO:0000269" key="4">
    <source>
    </source>
</evidence>
<evidence type="ECO:0000269" key="5">
    <source>
    </source>
</evidence>
<evidence type="ECO:0000303" key="6">
    <source>
    </source>
</evidence>
<evidence type="ECO:0000303" key="7">
    <source>
    </source>
</evidence>
<evidence type="ECO:0000305" key="8"/>
<evidence type="ECO:0000305" key="9">
    <source>
    </source>
</evidence>
<evidence type="ECO:0000305" key="10">
    <source>
    </source>
</evidence>
<evidence type="ECO:0000312" key="11">
    <source>
        <dbReference type="EMBL" id="ACZ37393.1"/>
    </source>
</evidence>
<keyword id="KW-0027">Amidation</keyword>
<keyword id="KW-0044">Antibiotic</keyword>
<keyword id="KW-0929">Antimicrobial</keyword>
<keyword id="KW-0204">Cytolysis</keyword>
<keyword id="KW-0295">Fungicide</keyword>
<keyword id="KW-0391">Immunity</keyword>
<keyword id="KW-0399">Innate immunity</keyword>
<keyword id="KW-0472">Membrane</keyword>
<keyword id="KW-0677">Repeat</keyword>
<keyword id="KW-0964">Secreted</keyword>
<keyword id="KW-0732">Signal</keyword>
<keyword id="KW-1052">Target cell membrane</keyword>
<keyword id="KW-1053">Target membrane</keyword>
<keyword id="KW-0800">Toxin</keyword>
<proteinExistence type="evidence at protein level"/>
<protein>
    <recommendedName>
        <fullName evidence="6 7">Venom peptide 2a</fullName>
        <shortName evidence="6 7">EpVP2a</shortName>
        <shortName evidence="11">VP2a</shortName>
    </recommendedName>
    <alternativeName>
        <fullName evidence="8">Eumenine mastoparan VP2a</fullName>
    </alternativeName>
</protein>